<feature type="chain" id="PRO_0000143103" description="Bcl2-associated agonist of cell death">
    <location>
        <begin position="1"/>
        <end position="168"/>
    </location>
</feature>
<feature type="region of interest" description="Disordered" evidence="4">
    <location>
        <begin position="1"/>
        <end position="105"/>
    </location>
</feature>
<feature type="region of interest" description="Disordered" evidence="4">
    <location>
        <begin position="125"/>
        <end position="145"/>
    </location>
</feature>
<feature type="short sequence motif" description="BH3">
    <location>
        <begin position="110"/>
        <end position="124"/>
    </location>
</feature>
<feature type="compositionally biased region" description="Polar residues" evidence="4">
    <location>
        <begin position="49"/>
        <end position="60"/>
    </location>
</feature>
<feature type="compositionally biased region" description="Polar residues" evidence="4">
    <location>
        <begin position="136"/>
        <end position="145"/>
    </location>
</feature>
<feature type="modified residue" description="N-acetylmethionine" evidence="15">
    <location>
        <position position="1"/>
    </location>
</feature>
<feature type="modified residue" description="Phosphoserine" evidence="16">
    <location>
        <position position="25"/>
    </location>
</feature>
<feature type="modified residue" description="Phosphoserine" evidence="16">
    <location>
        <position position="75"/>
    </location>
</feature>
<feature type="modified residue" description="Phosphoserine" evidence="14">
    <location>
        <position position="91"/>
    </location>
</feature>
<feature type="modified residue" description="Asymmetric dimethylarginine; by PRMT1" evidence="11">
    <location>
        <position position="94"/>
    </location>
</feature>
<feature type="modified residue" description="Asymmetric dimethylarginine; by PRMT1" evidence="11">
    <location>
        <position position="96"/>
    </location>
</feature>
<feature type="modified residue" description="Phosphoserine" evidence="2">
    <location>
        <position position="97"/>
    </location>
</feature>
<feature type="modified residue" description="Phosphoserine; by PKA, PKB, PAK1, RPS6KA1, RPS6KB1 and PKC/PRKCQ" evidence="3">
    <location>
        <position position="99"/>
    </location>
</feature>
<feature type="modified residue" description="Phosphoserine; by PKB/AKT1" evidence="5 16 18">
    <location>
        <position position="99"/>
    </location>
</feature>
<feature type="modified residue" description="Phosphoserine" evidence="13 14 16 18">
    <location>
        <position position="118"/>
    </location>
</feature>
<feature type="modified residue" description="Phosphoserine" evidence="18">
    <location>
        <position position="134"/>
    </location>
</feature>
<feature type="modified residue" description="Omega-N-methylarginine" evidence="17">
    <location>
        <position position="161"/>
    </location>
</feature>
<feature type="sequence variant" id="VAR_015380" description="In dbSNP:rs3729933.">
    <original>A</original>
    <variation>S</variation>
    <location>
        <position position="107"/>
    </location>
</feature>
<feature type="mutagenesis site" description="Decreased methylation; when associated with K-96." evidence="11">
    <original>R</original>
    <variation>K</variation>
    <location>
        <position position="94"/>
    </location>
</feature>
<feature type="mutagenesis site" description="Decreased methylation; when associated with K-94." evidence="11">
    <original>R</original>
    <variation>K</variation>
    <location>
        <position position="96"/>
    </location>
</feature>
<feature type="helix" evidence="19">
    <location>
        <begin position="106"/>
        <end position="121"/>
    </location>
</feature>
<feature type="strand" evidence="19">
    <location>
        <begin position="123"/>
        <end position="125"/>
    </location>
</feature>
<sequence length="168" mass="18392">MFQIPEFEPSEQEDSSSAERGLGPSPAGDGPSGSGKHHRQAPGLLWDASHQQEQPTSSSHHGGAGAVEIRSRHSSYPAGTEDDEGMGEEPSPFRGRSRSAPPNLWAAQRYGRELRRMSDEFVDSFKKGLPRPKSAGTATQMRQSSSWTRVFQSWWDRNLGRGSSAPSQ</sequence>
<comment type="function">
    <text evidence="1">Promotes cell death. Successfully competes for the binding to Bcl-X(L), Bcl-2 and Bcl-W, thereby affecting the level of heterodimerization of these proteins with BAX. Can reverse the death repressor activity of Bcl-X(L), but not that of Bcl-2 (By similarity). Appears to act as a link between growth factor receptor signaling and the apoptotic pathways.</text>
</comment>
<comment type="subunit">
    <text evidence="2 3 5 8 10">Forms heterodimers with the anti-apoptotic proteins, Bcl-X(L), Bcl-2 and Bcl-W. Also binds protein S100A10 (By similarity). The Ser-75/Ser-99 phosphorylated form binds 14-3-3 proteins (By similarity). Interacts with AKT1 and PIM3. Interacts (via BH3 domain) with NOL3 (via CARD domain); preventing the association of BAD with BCL2 (By similarity). Interacts with HIF3A (via C-terminus domain); the interaction reduces the binding between BAD and BAX (By similarity). Interacts with GIMAP3/IAN4 and GIMAP5/IAN5 (PubMed:16509771).</text>
</comment>
<comment type="interaction">
    <interactant intactId="EBI-700771">
        <id>Q92934</id>
    </interactant>
    <interactant intactId="EBI-77797">
        <id>P35609</id>
        <label>ACTN2</label>
    </interactant>
    <organismsDiffer>false</organismsDiffer>
    <experiments>3</experiments>
</comment>
<comment type="interaction">
    <interactant intactId="EBI-700771">
        <id>Q92934</id>
    </interactant>
    <interactant intactId="EBI-77613">
        <id>P05067</id>
        <label>APP</label>
    </interactant>
    <organismsDiffer>false</organismsDiffer>
    <experiments>3</experiments>
</comment>
<comment type="interaction">
    <interactant intactId="EBI-700771">
        <id>Q92934</id>
    </interactant>
    <interactant intactId="EBI-77694">
        <id>P10415</id>
        <label>BCL2</label>
    </interactant>
    <organismsDiffer>false</organismsDiffer>
    <experiments>7</experiments>
</comment>
<comment type="interaction">
    <interactant intactId="EBI-700771">
        <id>Q92934</id>
    </interactant>
    <interactant intactId="EBI-78035">
        <id>Q07817</id>
        <label>BCL2L1</label>
    </interactant>
    <organismsDiffer>false</organismsDiffer>
    <experiments>47</experiments>
</comment>
<comment type="interaction">
    <interactant intactId="EBI-700771">
        <id>Q92934</id>
    </interactant>
    <interactant intactId="EBI-287195">
        <id>Q07817-1</id>
        <label>BCL2L1</label>
    </interactant>
    <organismsDiffer>false</organismsDiffer>
    <experiments>6</experiments>
</comment>
<comment type="interaction">
    <interactant intactId="EBI-700771">
        <id>Q92934</id>
    </interactant>
    <interactant intactId="EBI-526406">
        <id>O43521</id>
        <label>BCL2L11</label>
    </interactant>
    <organismsDiffer>false</organismsDiffer>
    <experiments>2</experiments>
</comment>
<comment type="interaction">
    <interactant intactId="EBI-700771">
        <id>Q92934</id>
    </interactant>
    <interactant intactId="EBI-707714">
        <id>Q92843</id>
        <label>BCL2L2</label>
    </interactant>
    <organismsDiffer>false</organismsDiffer>
    <experiments>7</experiments>
</comment>
<comment type="interaction">
    <interactant intactId="EBI-700771">
        <id>Q92934</id>
    </interactant>
    <interactant intactId="EBI-849893">
        <id>O60238</id>
        <label>BNIP3L</label>
    </interactant>
    <organismsDiffer>false</organismsDiffer>
    <experiments>2</experiments>
</comment>
<comment type="interaction">
    <interactant intactId="EBI-700771">
        <id>Q92934</id>
    </interactant>
    <interactant intactId="EBI-1542113">
        <id>P07384</id>
        <label>CAPN1</label>
    </interactant>
    <organismsDiffer>false</organismsDiffer>
    <experiments>3</experiments>
</comment>
<comment type="interaction">
    <interactant intactId="EBI-700771">
        <id>Q92934</id>
    </interactant>
    <interactant intactId="EBI-948001">
        <id>Q15323</id>
        <label>KRT31</label>
    </interactant>
    <organismsDiffer>false</organismsDiffer>
    <experiments>3</experiments>
</comment>
<comment type="interaction">
    <interactant intactId="EBI-700771">
        <id>Q92934</id>
    </interactant>
    <interactant intactId="EBI-476295">
        <id>P31947</id>
        <label>SFN</label>
    </interactant>
    <organismsDiffer>false</organismsDiffer>
    <experiments>9</experiments>
</comment>
<comment type="interaction">
    <interactant intactId="EBI-700771">
        <id>Q92934</id>
    </interactant>
    <interactant intactId="EBI-359815">
        <id>P31946</id>
        <label>YWHAB</label>
    </interactant>
    <organismsDiffer>false</organismsDiffer>
    <experiments>6</experiments>
</comment>
<comment type="interaction">
    <interactant intactId="EBI-700771">
        <id>Q92934</id>
    </interactant>
    <interactant intactId="EBI-356498">
        <id>P62258</id>
        <label>YWHAE</label>
    </interactant>
    <organismsDiffer>false</organismsDiffer>
    <experiments>8</experiments>
</comment>
<comment type="interaction">
    <interactant intactId="EBI-700771">
        <id>Q92934</id>
    </interactant>
    <interactant intactId="EBI-359832">
        <id>P61981</id>
        <label>YWHAG</label>
    </interactant>
    <organismsDiffer>false</organismsDiffer>
    <experiments>7</experiments>
</comment>
<comment type="interaction">
    <interactant intactId="EBI-700771">
        <id>Q92934</id>
    </interactant>
    <interactant intactId="EBI-306940">
        <id>Q04917</id>
        <label>YWHAH</label>
    </interactant>
    <organismsDiffer>false</organismsDiffer>
    <experiments>8</experiments>
</comment>
<comment type="interaction">
    <interactant intactId="EBI-700771">
        <id>Q92934</id>
    </interactant>
    <interactant intactId="EBI-359854">
        <id>P27348</id>
        <label>YWHAQ</label>
    </interactant>
    <organismsDiffer>false</organismsDiffer>
    <experiments>7</experiments>
</comment>
<comment type="interaction">
    <interactant intactId="EBI-700771">
        <id>Q92934</id>
    </interactant>
    <interactant intactId="EBI-347088">
        <id>P63104</id>
        <label>YWHAZ</label>
    </interactant>
    <organismsDiffer>false</organismsDiffer>
    <experiments>10</experiments>
</comment>
<comment type="interaction">
    <interactant intactId="EBI-700771">
        <id>Q92934</id>
    </interactant>
    <interactant intactId="EBI-2548993">
        <id>P03495</id>
        <label>NS</label>
    </interactant>
    <organismsDiffer>true</organismsDiffer>
    <experiments>2</experiments>
</comment>
<comment type="interaction">
    <interactant intactId="EBI-700771">
        <id>Q92934</id>
    </interactant>
    <interactant intactId="EBI-7115640">
        <id>P17361</id>
        <label>OPG035</label>
    </interactant>
    <organismsDiffer>true</organismsDiffer>
    <experiments>2</experiments>
</comment>
<comment type="subcellular location">
    <subcellularLocation>
        <location>Mitochondrion outer membrane</location>
    </subcellularLocation>
    <subcellularLocation>
        <location evidence="3">Cytoplasm</location>
    </subcellularLocation>
    <text evidence="3">Colocalizes with HIF3A in the cytoplasm (By similarity). Upon phosphorylation, locates to the cytoplasm.</text>
</comment>
<comment type="tissue specificity">
    <text>Expressed in a wide variety of tissues.</text>
</comment>
<comment type="domain">
    <text>Intact BH3 motif is required by BIK, BID, BAK, BAD and BAX for their pro-apoptotic activity and for their interaction with anti-apoptotic members of the Bcl-2 family.</text>
</comment>
<comment type="PTM">
    <text evidence="5 6 7 9">Phosphorylated on one or more of Ser-75, Ser-99, Ser-118 and Ser-134 in response to survival stimuli, which blocks its pro-apoptotic activity. Phosphorylation on Ser-99 or Ser-75 promotes heterodimerization with 14-3-3 proteins. This interaction then facilitates the phosphorylation at Ser-118, a site within the BH3 motif, leading to the release of Bcl-X(L) and the promotion of cell survival. Ser-99 is the major site of AKT/PKB phosphorylation, Ser-118 the major site of protein kinase A (CAPK) phosphorylation. Phosphorylation at Ser-99 by PKB/AKT1 is almost completely blocked by the apoptotic C-terminus cleavage product of PKN2 generated by caspases-3 activity during apoptosis.</text>
</comment>
<comment type="PTM">
    <text evidence="5 11">Methylation at Arg-94 and Arg-96 by PRMT1 inhibits Akt-mediated phosphorylation at Ser-99.</text>
</comment>
<comment type="similarity">
    <text evidence="12">Belongs to the Bcl-2 family.</text>
</comment>
<comment type="caution">
    <text evidence="12">The protein name 'Bcl2 antagonist of cell death' may be misleading. The protein antagonises Bcl2-mediated repression of cell death, hence it promotes apoptosis.</text>
</comment>
<comment type="sequence caution" evidence="12">
    <conflict type="frameshift">
        <sequence resource="EMBL-CDS" id="AAB36516"/>
    </conflict>
</comment>
<comment type="online information" name="Wikipedia">
    <link uri="https://en.wikipedia.org/wiki/Bcl-2-associated_death_promoter"/>
    <text>Bcl 2-associated death promoter entry</text>
</comment>
<keyword id="KW-0002">3D-structure</keyword>
<keyword id="KW-0007">Acetylation</keyword>
<keyword id="KW-0053">Apoptosis</keyword>
<keyword id="KW-0963">Cytoplasm</keyword>
<keyword id="KW-0472">Membrane</keyword>
<keyword id="KW-0488">Methylation</keyword>
<keyword id="KW-0496">Mitochondrion</keyword>
<keyword id="KW-1000">Mitochondrion outer membrane</keyword>
<keyword id="KW-0597">Phosphoprotein</keyword>
<keyword id="KW-1267">Proteomics identification</keyword>
<keyword id="KW-1185">Reference proteome</keyword>
<accession>Q92934</accession>
<accession>O14803</accession>
<accession>Q6FH21</accession>
<reference key="1">
    <citation type="submission" date="1996-11" db="EMBL/GenBank/DDBJ databases">
        <title>A human protein that interacts with Bcl-2 and have homology to mouse BAD.</title>
        <authorList>
            <person name="Yin D.X."/>
            <person name="Li Z."/>
            <person name="Huang B."/>
            <person name="Chen S."/>
            <person name="Zhou H."/>
        </authorList>
    </citation>
    <scope>NUCLEOTIDE SEQUENCE [MRNA]</scope>
</reference>
<reference key="2">
    <citation type="journal article" date="1996" name="Cell">
        <title>Bcl-2 targets the protein kinase Raf-1 to mitochondria.</title>
        <authorList>
            <person name="Wang H.-G."/>
            <person name="Rapp U.R."/>
            <person name="Reed J.C."/>
        </authorList>
    </citation>
    <scope>NUCLEOTIDE SEQUENCE [MRNA]</scope>
    <scope>PHOSPHORYLATION BY RAF-1</scope>
</reference>
<reference key="3">
    <citation type="submission" date="1997-10" db="EMBL/GenBank/DDBJ databases">
        <authorList>
            <person name="Takayama S."/>
            <person name="Reed J.C."/>
        </authorList>
    </citation>
    <scope>NUCLEOTIDE SEQUENCE [MRNA]</scope>
</reference>
<reference key="4">
    <citation type="journal article" date="1997" name="J. Biol. Chem.">
        <title>Dimerization properties of human BAD. Identification of a BH-3 domain and analysis of its binding to mutant BCL-2 and BCL-XL proteins.</title>
        <authorList>
            <person name="Ottilie S."/>
            <person name="Diaz J.-L."/>
            <person name="Horne W."/>
            <person name="Chang J."/>
            <person name="Wang Y."/>
            <person name="Wilson G."/>
            <person name="Chang S."/>
            <person name="Weeks S."/>
            <person name="Fritz L.C."/>
            <person name="Oltersdorf T."/>
        </authorList>
    </citation>
    <scope>NUCLEOTIDE SEQUENCE [MRNA]</scope>
    <scope>DIMERIZATION</scope>
    <source>
        <tissue>Bone marrow</tissue>
    </source>
</reference>
<reference key="5">
    <citation type="journal article" date="2004" name="Nat. Genet.">
        <title>Complete sequencing and characterization of 21,243 full-length human cDNAs.</title>
        <authorList>
            <person name="Ota T."/>
            <person name="Suzuki Y."/>
            <person name="Nishikawa T."/>
            <person name="Otsuki T."/>
            <person name="Sugiyama T."/>
            <person name="Irie R."/>
            <person name="Wakamatsu A."/>
            <person name="Hayashi K."/>
            <person name="Sato H."/>
            <person name="Nagai K."/>
            <person name="Kimura K."/>
            <person name="Makita H."/>
            <person name="Sekine M."/>
            <person name="Obayashi M."/>
            <person name="Nishi T."/>
            <person name="Shibahara T."/>
            <person name="Tanaka T."/>
            <person name="Ishii S."/>
            <person name="Yamamoto J."/>
            <person name="Saito K."/>
            <person name="Kawai Y."/>
            <person name="Isono Y."/>
            <person name="Nakamura Y."/>
            <person name="Nagahari K."/>
            <person name="Murakami K."/>
            <person name="Yasuda T."/>
            <person name="Iwayanagi T."/>
            <person name="Wagatsuma M."/>
            <person name="Shiratori A."/>
            <person name="Sudo H."/>
            <person name="Hosoiri T."/>
            <person name="Kaku Y."/>
            <person name="Kodaira H."/>
            <person name="Kondo H."/>
            <person name="Sugawara M."/>
            <person name="Takahashi M."/>
            <person name="Kanda K."/>
            <person name="Yokoi T."/>
            <person name="Furuya T."/>
            <person name="Kikkawa E."/>
            <person name="Omura Y."/>
            <person name="Abe K."/>
            <person name="Kamihara K."/>
            <person name="Katsuta N."/>
            <person name="Sato K."/>
            <person name="Tanikawa M."/>
            <person name="Yamazaki M."/>
            <person name="Ninomiya K."/>
            <person name="Ishibashi T."/>
            <person name="Yamashita H."/>
            <person name="Murakawa K."/>
            <person name="Fujimori K."/>
            <person name="Tanai H."/>
            <person name="Kimata M."/>
            <person name="Watanabe M."/>
            <person name="Hiraoka S."/>
            <person name="Chiba Y."/>
            <person name="Ishida S."/>
            <person name="Ono Y."/>
            <person name="Takiguchi S."/>
            <person name="Watanabe S."/>
            <person name="Yosida M."/>
            <person name="Hotuta T."/>
            <person name="Kusano J."/>
            <person name="Kanehori K."/>
            <person name="Takahashi-Fujii A."/>
            <person name="Hara H."/>
            <person name="Tanase T.-O."/>
            <person name="Nomura Y."/>
            <person name="Togiya S."/>
            <person name="Komai F."/>
            <person name="Hara R."/>
            <person name="Takeuchi K."/>
            <person name="Arita M."/>
            <person name="Imose N."/>
            <person name="Musashino K."/>
            <person name="Yuuki H."/>
            <person name="Oshima A."/>
            <person name="Sasaki N."/>
            <person name="Aotsuka S."/>
            <person name="Yoshikawa Y."/>
            <person name="Matsunawa H."/>
            <person name="Ichihara T."/>
            <person name="Shiohata N."/>
            <person name="Sano S."/>
            <person name="Moriya S."/>
            <person name="Momiyama H."/>
            <person name="Satoh N."/>
            <person name="Takami S."/>
            <person name="Terashima Y."/>
            <person name="Suzuki O."/>
            <person name="Nakagawa S."/>
            <person name="Senoh A."/>
            <person name="Mizoguchi H."/>
            <person name="Goto Y."/>
            <person name="Shimizu F."/>
            <person name="Wakebe H."/>
            <person name="Hishigaki H."/>
            <person name="Watanabe T."/>
            <person name="Sugiyama A."/>
            <person name="Takemoto M."/>
            <person name="Kawakami B."/>
            <person name="Yamazaki M."/>
            <person name="Watanabe K."/>
            <person name="Kumagai A."/>
            <person name="Itakura S."/>
            <person name="Fukuzumi Y."/>
            <person name="Fujimori Y."/>
            <person name="Komiyama M."/>
            <person name="Tashiro H."/>
            <person name="Tanigami A."/>
            <person name="Fujiwara T."/>
            <person name="Ono T."/>
            <person name="Yamada K."/>
            <person name="Fujii Y."/>
            <person name="Ozaki K."/>
            <person name="Hirao M."/>
            <person name="Ohmori Y."/>
            <person name="Kawabata A."/>
            <person name="Hikiji T."/>
            <person name="Kobatake N."/>
            <person name="Inagaki H."/>
            <person name="Ikema Y."/>
            <person name="Okamoto S."/>
            <person name="Okitani R."/>
            <person name="Kawakami T."/>
            <person name="Noguchi S."/>
            <person name="Itoh T."/>
            <person name="Shigeta K."/>
            <person name="Senba T."/>
            <person name="Matsumura K."/>
            <person name="Nakajima Y."/>
            <person name="Mizuno T."/>
            <person name="Morinaga M."/>
            <person name="Sasaki M."/>
            <person name="Togashi T."/>
            <person name="Oyama M."/>
            <person name="Hata H."/>
            <person name="Watanabe M."/>
            <person name="Komatsu T."/>
            <person name="Mizushima-Sugano J."/>
            <person name="Satoh T."/>
            <person name="Shirai Y."/>
            <person name="Takahashi Y."/>
            <person name="Nakagawa K."/>
            <person name="Okumura K."/>
            <person name="Nagase T."/>
            <person name="Nomura N."/>
            <person name="Kikuchi H."/>
            <person name="Masuho Y."/>
            <person name="Yamashita R."/>
            <person name="Nakai K."/>
            <person name="Yada T."/>
            <person name="Nakamura Y."/>
            <person name="Ohara O."/>
            <person name="Isogai T."/>
            <person name="Sugano S."/>
        </authorList>
    </citation>
    <scope>NUCLEOTIDE SEQUENCE [LARGE SCALE MRNA]</scope>
    <source>
        <tissue>Skeletal muscle</tissue>
    </source>
</reference>
<reference key="6">
    <citation type="submission" date="2004-06" db="EMBL/GenBank/DDBJ databases">
        <title>Cloning of human full open reading frames in Gateway(TM) system entry vector (pDONR201).</title>
        <authorList>
            <person name="Ebert L."/>
            <person name="Schick M."/>
            <person name="Neubert P."/>
            <person name="Schatten R."/>
            <person name="Henze S."/>
            <person name="Korn B."/>
        </authorList>
    </citation>
    <scope>NUCLEOTIDE SEQUENCE [LARGE SCALE MRNA]</scope>
</reference>
<reference key="7">
    <citation type="submission" date="2004-10" db="EMBL/GenBank/DDBJ databases">
        <title>Cloning of human full-length CDSs in BD Creator(TM) system donor vector.</title>
        <authorList>
            <person name="Kalnine N."/>
            <person name="Chen X."/>
            <person name="Rolfs A."/>
            <person name="Halleck A."/>
            <person name="Hines L."/>
            <person name="Eisenstein S."/>
            <person name="Koundinya M."/>
            <person name="Raphael J."/>
            <person name="Moreira D."/>
            <person name="Kelley T."/>
            <person name="LaBaer J."/>
            <person name="Lin Y."/>
            <person name="Phelan M."/>
            <person name="Farmer A."/>
        </authorList>
    </citation>
    <scope>NUCLEOTIDE SEQUENCE [LARGE SCALE MRNA]</scope>
</reference>
<reference key="8">
    <citation type="journal article" date="2008" name="Nat. Methods">
        <title>Human protein factory for converting the transcriptome into an in vitro-expressed proteome.</title>
        <authorList>
            <person name="Goshima N."/>
            <person name="Kawamura Y."/>
            <person name="Fukumoto A."/>
            <person name="Miura A."/>
            <person name="Honma R."/>
            <person name="Satoh R."/>
            <person name="Wakamatsu A."/>
            <person name="Yamamoto J."/>
            <person name="Kimura K."/>
            <person name="Nishikawa T."/>
            <person name="Andoh T."/>
            <person name="Iida Y."/>
            <person name="Ishikawa K."/>
            <person name="Ito E."/>
            <person name="Kagawa N."/>
            <person name="Kaminaga C."/>
            <person name="Kanehori K."/>
            <person name="Kawakami B."/>
            <person name="Kenmochi K."/>
            <person name="Kimura R."/>
            <person name="Kobayashi M."/>
            <person name="Kuroita T."/>
            <person name="Kuwayama H."/>
            <person name="Maruyama Y."/>
            <person name="Matsuo K."/>
            <person name="Minami K."/>
            <person name="Mitsubori M."/>
            <person name="Mori M."/>
            <person name="Morishita R."/>
            <person name="Murase A."/>
            <person name="Nishikawa A."/>
            <person name="Nishikawa S."/>
            <person name="Okamoto T."/>
            <person name="Sakagami N."/>
            <person name="Sakamoto Y."/>
            <person name="Sasaki Y."/>
            <person name="Seki T."/>
            <person name="Sono S."/>
            <person name="Sugiyama A."/>
            <person name="Sumiya T."/>
            <person name="Takayama T."/>
            <person name="Takayama Y."/>
            <person name="Takeda H."/>
            <person name="Togashi T."/>
            <person name="Yahata K."/>
            <person name="Yamada H."/>
            <person name="Yanagisawa Y."/>
            <person name="Endo Y."/>
            <person name="Imamoto F."/>
            <person name="Kisu Y."/>
            <person name="Tanaka S."/>
            <person name="Isogai T."/>
            <person name="Imai J."/>
            <person name="Watanabe S."/>
            <person name="Nomura N."/>
        </authorList>
    </citation>
    <scope>NUCLEOTIDE SEQUENCE [LARGE SCALE MRNA]</scope>
</reference>
<reference key="9">
    <citation type="submission" date="2005-07" db="EMBL/GenBank/DDBJ databases">
        <authorList>
            <person name="Mural R.J."/>
            <person name="Istrail S."/>
            <person name="Sutton G."/>
            <person name="Florea L."/>
            <person name="Halpern A.L."/>
            <person name="Mobarry C.M."/>
            <person name="Lippert R."/>
            <person name="Walenz B."/>
            <person name="Shatkay H."/>
            <person name="Dew I."/>
            <person name="Miller J.R."/>
            <person name="Flanigan M.J."/>
            <person name="Edwards N.J."/>
            <person name="Bolanos R."/>
            <person name="Fasulo D."/>
            <person name="Halldorsson B.V."/>
            <person name="Hannenhalli S."/>
            <person name="Turner R."/>
            <person name="Yooseph S."/>
            <person name="Lu F."/>
            <person name="Nusskern D.R."/>
            <person name="Shue B.C."/>
            <person name="Zheng X.H."/>
            <person name="Zhong F."/>
            <person name="Delcher A.L."/>
            <person name="Huson D.H."/>
            <person name="Kravitz S.A."/>
            <person name="Mouchard L."/>
            <person name="Reinert K."/>
            <person name="Remington K.A."/>
            <person name="Clark A.G."/>
            <person name="Waterman M.S."/>
            <person name="Eichler E.E."/>
            <person name="Adams M.D."/>
            <person name="Hunkapiller M.W."/>
            <person name="Myers E.W."/>
            <person name="Venter J.C."/>
        </authorList>
    </citation>
    <scope>NUCLEOTIDE SEQUENCE [LARGE SCALE GENOMIC DNA]</scope>
</reference>
<reference key="10">
    <citation type="journal article" date="2004" name="Genome Res.">
        <title>The status, quality, and expansion of the NIH full-length cDNA project: the Mammalian Gene Collection (MGC).</title>
        <authorList>
            <consortium name="The MGC Project Team"/>
        </authorList>
    </citation>
    <scope>NUCLEOTIDE SEQUENCE [LARGE SCALE MRNA]</scope>
    <source>
        <tissue>Lung</tissue>
    </source>
</reference>
<reference key="11">
    <citation type="journal article" date="2000" name="J. Biol. Chem.">
        <title>Inhibition of Akt and its anti-apoptotic activities by tumor necrosis factor-induced protein kinase C-related kinase 2 (PRK2) cleavage.</title>
        <authorList>
            <person name="Koh H."/>
            <person name="Lee K.H."/>
            <person name="Kim D."/>
            <person name="Kim S."/>
            <person name="Kim J.W."/>
            <person name="Chung J."/>
        </authorList>
    </citation>
    <scope>INTERACTION WITH AKT1</scope>
    <scope>PHOSPHORYLATION AT SER-99</scope>
</reference>
<reference key="12">
    <citation type="journal article" date="2001" name="J. Biol. Chem.">
        <title>The serine/threonine kinase PAK4 prevents caspase activation and protects cells from apoptosis.</title>
        <authorList>
            <person name="Gnesutta N."/>
            <person name="Qu J."/>
            <person name="Minden A."/>
        </authorList>
    </citation>
    <scope>PHOSPHORYLATION AT SER-75</scope>
</reference>
<reference key="13">
    <citation type="journal article" date="2003" name="Mol. Cell. Biol.">
        <title>p21-Activated kinase 5 (Pak5) localizes to mitochondria and inhibits apoptosis by phosphorylating BAD.</title>
        <authorList>
            <person name="Cotteret S."/>
            <person name="Jaffer Z.M."/>
            <person name="Beeser A."/>
            <person name="Chernoff J."/>
        </authorList>
    </citation>
    <scope>PHOSPHORYLATION AT SER-75</scope>
</reference>
<reference key="14">
    <citation type="journal article" date="2006" name="Cancer Res.">
        <title>Pim-3, a proto-oncogene with serine/threonine kinase activity, is aberrantly expressed in human pancreatic cancer and phosphorylates bad to block bad-mediated apoptosis in human pancreatic cancer cell lines.</title>
        <authorList>
            <person name="Li Y.Y."/>
            <person name="Popivanova B.K."/>
            <person name="Nagai Y."/>
            <person name="Ishikura H."/>
            <person name="Fujii C."/>
            <person name="Mukaida N."/>
        </authorList>
    </citation>
    <scope>PHOSPHORYLATION AT SER-75</scope>
</reference>
<reference key="15">
    <citation type="journal article" date="2006" name="PLoS Biol.">
        <title>IAN family critically regulates survival and development of T lymphocytes.</title>
        <authorList>
            <person name="Nitta T."/>
            <person name="Nasreen M."/>
            <person name="Seike T."/>
            <person name="Goji A."/>
            <person name="Ohigashi I."/>
            <person name="Miyazaki T."/>
            <person name="Ohta T."/>
            <person name="Kanno M."/>
            <person name="Takahama Y."/>
        </authorList>
    </citation>
    <scope>INTERACTION WITH GIMAP3 AND GIMAP5</scope>
</reference>
<reference key="16">
    <citation type="journal article" date="2007" name="Cancer Sci.">
        <title>Proto-oncogene, Pim-3 with serine/threonine kinase activity, is aberrantly expressed in human colon cancer cells and can prevent Bad-mediated apoptosis.</title>
        <authorList>
            <person name="Popivanova B.K."/>
            <person name="Li Y.Y."/>
            <person name="Zheng H."/>
            <person name="Omura K."/>
            <person name="Fujii C."/>
            <person name="Tsuneyama K."/>
            <person name="Mukaida N."/>
        </authorList>
    </citation>
    <scope>INTERACTION WITH PIM3</scope>
</reference>
<reference key="17">
    <citation type="journal article" date="2008" name="Proc. Natl. Acad. Sci. U.S.A.">
        <title>A quantitative atlas of mitotic phosphorylation.</title>
        <authorList>
            <person name="Dephoure N."/>
            <person name="Zhou C."/>
            <person name="Villen J."/>
            <person name="Beausoleil S.A."/>
            <person name="Bakalarski C.E."/>
            <person name="Elledge S.J."/>
            <person name="Gygi S.P."/>
        </authorList>
    </citation>
    <scope>PHOSPHORYLATION [LARGE SCALE ANALYSIS] AT SER-118</scope>
    <scope>IDENTIFICATION BY MASS SPECTROMETRY [LARGE SCALE ANALYSIS]</scope>
    <source>
        <tissue>Cervix carcinoma</tissue>
    </source>
</reference>
<reference key="18">
    <citation type="journal article" date="2009" name="Sci. Signal.">
        <title>Quantitative phosphoproteomic analysis of T cell receptor signaling reveals system-wide modulation of protein-protein interactions.</title>
        <authorList>
            <person name="Mayya V."/>
            <person name="Lundgren D.H."/>
            <person name="Hwang S.-I."/>
            <person name="Rezaul K."/>
            <person name="Wu L."/>
            <person name="Eng J.K."/>
            <person name="Rodionov V."/>
            <person name="Han D.K."/>
        </authorList>
    </citation>
    <scope>PHOSPHORYLATION [LARGE SCALE ANALYSIS] AT SER-91 AND SER-118</scope>
    <scope>IDENTIFICATION BY MASS SPECTROMETRY [LARGE SCALE ANALYSIS]</scope>
    <source>
        <tissue>Leukemic T-cell</tissue>
    </source>
</reference>
<reference key="19">
    <citation type="journal article" date="2011" name="Proc. Natl. Acad. Sci. U.S.A.">
        <title>Arginine methylation of BCL-2 antagonist of cell death (BAD) counteracts its phosphorylation and inactivation by Akt.</title>
        <authorList>
            <person name="Sakamaki J."/>
            <person name="Daitoku H."/>
            <person name="Ueno K."/>
            <person name="Hagiwara A."/>
            <person name="Yamagata K."/>
            <person name="Fukamizu A."/>
        </authorList>
    </citation>
    <scope>METHYLATION AT ARG-94 AND ARG-96 BY PRMT1</scope>
    <scope>MUTAGENESIS OF ARG-94 AND ARG-96</scope>
</reference>
<reference key="20">
    <citation type="journal article" date="2012" name="Proc. Natl. Acad. Sci. U.S.A.">
        <title>N-terminal acetylome analyses and functional insights of the N-terminal acetyltransferase NatB.</title>
        <authorList>
            <person name="Van Damme P."/>
            <person name="Lasa M."/>
            <person name="Polevoda B."/>
            <person name="Gazquez C."/>
            <person name="Elosegui-Artola A."/>
            <person name="Kim D.S."/>
            <person name="De Juan-Pardo E."/>
            <person name="Demeyer K."/>
            <person name="Hole K."/>
            <person name="Larrea E."/>
            <person name="Timmerman E."/>
            <person name="Prieto J."/>
            <person name="Arnesen T."/>
            <person name="Sherman F."/>
            <person name="Gevaert K."/>
            <person name="Aldabe R."/>
        </authorList>
    </citation>
    <scope>ACETYLATION [LARGE SCALE ANALYSIS] AT MET-1</scope>
    <scope>IDENTIFICATION BY MASS SPECTROMETRY [LARGE SCALE ANALYSIS]</scope>
</reference>
<reference key="21">
    <citation type="journal article" date="2013" name="J. Proteome Res.">
        <title>Toward a comprehensive characterization of a human cancer cell phosphoproteome.</title>
        <authorList>
            <person name="Zhou H."/>
            <person name="Di Palma S."/>
            <person name="Preisinger C."/>
            <person name="Peng M."/>
            <person name="Polat A.N."/>
            <person name="Heck A.J."/>
            <person name="Mohammed S."/>
        </authorList>
    </citation>
    <scope>PHOSPHORYLATION [LARGE SCALE ANALYSIS] AT SER-25; SER-75; SER-99 AND SER-118</scope>
    <scope>IDENTIFICATION BY MASS SPECTROMETRY [LARGE SCALE ANALYSIS]</scope>
    <source>
        <tissue>Cervix carcinoma</tissue>
        <tissue>Erythroleukemia</tissue>
    </source>
</reference>
<reference key="22">
    <citation type="journal article" date="2014" name="J. Proteomics">
        <title>An enzyme assisted RP-RPLC approach for in-depth analysis of human liver phosphoproteome.</title>
        <authorList>
            <person name="Bian Y."/>
            <person name="Song C."/>
            <person name="Cheng K."/>
            <person name="Dong M."/>
            <person name="Wang F."/>
            <person name="Huang J."/>
            <person name="Sun D."/>
            <person name="Wang L."/>
            <person name="Ye M."/>
            <person name="Zou H."/>
        </authorList>
    </citation>
    <scope>PHOSPHORYLATION [LARGE SCALE ANALYSIS] AT SER-99; SER-118 AND SER-134</scope>
    <scope>IDENTIFICATION BY MASS SPECTROMETRY [LARGE SCALE ANALYSIS]</scope>
    <source>
        <tissue>Liver</tissue>
    </source>
</reference>
<reference key="23">
    <citation type="journal article" date="2014" name="Mol. Cell. Proteomics">
        <title>Immunoaffinity enrichment and mass spectrometry analysis of protein methylation.</title>
        <authorList>
            <person name="Guo A."/>
            <person name="Gu H."/>
            <person name="Zhou J."/>
            <person name="Mulhern D."/>
            <person name="Wang Y."/>
            <person name="Lee K.A."/>
            <person name="Yang V."/>
            <person name="Aguiar M."/>
            <person name="Kornhauser J."/>
            <person name="Jia X."/>
            <person name="Ren J."/>
            <person name="Beausoleil S.A."/>
            <person name="Silva J.C."/>
            <person name="Vemulapalli V."/>
            <person name="Bedford M.T."/>
            <person name="Comb M.J."/>
        </authorList>
    </citation>
    <scope>METHYLATION [LARGE SCALE ANALYSIS] AT ARG-161</scope>
    <scope>IDENTIFICATION BY MASS SPECTROMETRY [LARGE SCALE ANALYSIS]</scope>
    <source>
        <tissue>Colon carcinoma</tissue>
    </source>
</reference>
<reference key="24">
    <citation type="journal article" date="2000" name="Protein Sci.">
        <title>Rationale for Bcl-xL/Bad peptide complex formation from structure, mutagenesis, and biophysical studies.</title>
        <authorList>
            <person name="Petros A.M."/>
            <person name="Nettesheim D.G."/>
            <person name="Wang Y."/>
            <person name="Olejniczak E.T."/>
            <person name="Meadows R.P."/>
            <person name="Mack J."/>
            <person name="Swift K."/>
            <person name="Matayoshi E.D."/>
            <person name="Zhang H."/>
            <person name="Thompson C.B."/>
            <person name="Fesik S.W."/>
        </authorList>
    </citation>
    <scope>STRUCTURE BY NMR OF 103-127</scope>
</reference>
<evidence type="ECO:0000250" key="1"/>
<evidence type="ECO:0000250" key="2">
    <source>
        <dbReference type="UniProtKB" id="O35147"/>
    </source>
</evidence>
<evidence type="ECO:0000250" key="3">
    <source>
        <dbReference type="UniProtKB" id="Q61337"/>
    </source>
</evidence>
<evidence type="ECO:0000256" key="4">
    <source>
        <dbReference type="SAM" id="MobiDB-lite"/>
    </source>
</evidence>
<evidence type="ECO:0000269" key="5">
    <source>
    </source>
</evidence>
<evidence type="ECO:0000269" key="6">
    <source>
    </source>
</evidence>
<evidence type="ECO:0000269" key="7">
    <source>
    </source>
</evidence>
<evidence type="ECO:0000269" key="8">
    <source>
    </source>
</evidence>
<evidence type="ECO:0000269" key="9">
    <source>
    </source>
</evidence>
<evidence type="ECO:0000269" key="10">
    <source>
    </source>
</evidence>
<evidence type="ECO:0000269" key="11">
    <source>
    </source>
</evidence>
<evidence type="ECO:0000305" key="12"/>
<evidence type="ECO:0007744" key="13">
    <source>
    </source>
</evidence>
<evidence type="ECO:0007744" key="14">
    <source>
    </source>
</evidence>
<evidence type="ECO:0007744" key="15">
    <source>
    </source>
</evidence>
<evidence type="ECO:0007744" key="16">
    <source>
    </source>
</evidence>
<evidence type="ECO:0007744" key="17">
    <source>
    </source>
</evidence>
<evidence type="ECO:0007744" key="18">
    <source>
    </source>
</evidence>
<evidence type="ECO:0007829" key="19">
    <source>
        <dbReference type="PDB" id="1G5J"/>
    </source>
</evidence>
<protein>
    <recommendedName>
        <fullName>Bcl2-associated agonist of cell death</fullName>
        <shortName>BAD</shortName>
    </recommendedName>
    <alternativeName>
        <fullName>Bcl-2-binding component 6</fullName>
    </alternativeName>
    <alternativeName>
        <fullName>Bcl-2-like protein 8</fullName>
        <shortName>Bcl2-L-8</shortName>
    </alternativeName>
    <alternativeName>
        <fullName>Bcl-xL/Bcl-2-associated death promoter</fullName>
    </alternativeName>
    <alternativeName>
        <fullName>Bcl2 antagonist of cell death</fullName>
    </alternativeName>
</protein>
<organism>
    <name type="scientific">Homo sapiens</name>
    <name type="common">Human</name>
    <dbReference type="NCBI Taxonomy" id="9606"/>
    <lineage>
        <taxon>Eukaryota</taxon>
        <taxon>Metazoa</taxon>
        <taxon>Chordata</taxon>
        <taxon>Craniata</taxon>
        <taxon>Vertebrata</taxon>
        <taxon>Euteleostomi</taxon>
        <taxon>Mammalia</taxon>
        <taxon>Eutheria</taxon>
        <taxon>Euarchontoglires</taxon>
        <taxon>Primates</taxon>
        <taxon>Haplorrhini</taxon>
        <taxon>Catarrhini</taxon>
        <taxon>Hominidae</taxon>
        <taxon>Homo</taxon>
    </lineage>
</organism>
<dbReference type="EMBL" id="U66879">
    <property type="protein sequence ID" value="AAB36516.1"/>
    <property type="status" value="ALT_FRAME"/>
    <property type="molecule type" value="mRNA"/>
</dbReference>
<dbReference type="EMBL" id="AF021792">
    <property type="protein sequence ID" value="AAB72092.1"/>
    <property type="molecule type" value="mRNA"/>
</dbReference>
<dbReference type="EMBL" id="AF031523">
    <property type="protein sequence ID" value="AAB88124.1"/>
    <property type="molecule type" value="mRNA"/>
</dbReference>
<dbReference type="EMBL" id="AK291863">
    <property type="protein sequence ID" value="BAF84552.1"/>
    <property type="molecule type" value="mRNA"/>
</dbReference>
<dbReference type="EMBL" id="BT006678">
    <property type="protein sequence ID" value="AAP35324.1"/>
    <property type="molecule type" value="mRNA"/>
</dbReference>
<dbReference type="EMBL" id="CR541935">
    <property type="protein sequence ID" value="CAG46733.1"/>
    <property type="molecule type" value="mRNA"/>
</dbReference>
<dbReference type="EMBL" id="CR541959">
    <property type="protein sequence ID" value="CAG46757.1"/>
    <property type="molecule type" value="mRNA"/>
</dbReference>
<dbReference type="EMBL" id="AB451254">
    <property type="protein sequence ID" value="BAG70068.1"/>
    <property type="molecule type" value="mRNA"/>
</dbReference>
<dbReference type="EMBL" id="AB451378">
    <property type="protein sequence ID" value="BAG70192.1"/>
    <property type="molecule type" value="mRNA"/>
</dbReference>
<dbReference type="EMBL" id="CH471076">
    <property type="protein sequence ID" value="EAW74235.1"/>
    <property type="molecule type" value="Genomic_DNA"/>
</dbReference>
<dbReference type="EMBL" id="BC001901">
    <property type="protein sequence ID" value="AAH01901.1"/>
    <property type="molecule type" value="mRNA"/>
</dbReference>
<dbReference type="EMBL" id="BC095431">
    <property type="protein sequence ID" value="AAH95431.1"/>
    <property type="molecule type" value="mRNA"/>
</dbReference>
<dbReference type="CCDS" id="CCDS8065.1"/>
<dbReference type="RefSeq" id="NP_004313.1">
    <property type="nucleotide sequence ID" value="NM_004322.3"/>
</dbReference>
<dbReference type="RefSeq" id="NP_116784.1">
    <property type="nucleotide sequence ID" value="NM_032989.3"/>
</dbReference>
<dbReference type="PDB" id="1G5J">
    <property type="method" value="NMR"/>
    <property type="chains" value="B=103-127"/>
</dbReference>
<dbReference type="PDB" id="7Q16">
    <property type="method" value="X-ray"/>
    <property type="resolution" value="2.36 A"/>
    <property type="chains" value="A=71-81"/>
</dbReference>
<dbReference type="PDBsum" id="1G5J"/>
<dbReference type="PDBsum" id="7Q16"/>
<dbReference type="BMRB" id="Q92934"/>
<dbReference type="SMR" id="Q92934"/>
<dbReference type="BioGRID" id="107048">
    <property type="interactions" value="121"/>
</dbReference>
<dbReference type="ComplexPortal" id="CPX-1982">
    <property type="entry name" value="BAD:BCL-2 complex"/>
</dbReference>
<dbReference type="ComplexPortal" id="CPX-1983">
    <property type="entry name" value="BAD:BCL-XL complex"/>
</dbReference>
<dbReference type="DIP" id="DIP-29184N"/>
<dbReference type="ELM" id="Q92934"/>
<dbReference type="FunCoup" id="Q92934">
    <property type="interactions" value="1348"/>
</dbReference>
<dbReference type="IntAct" id="Q92934">
    <property type="interactions" value="91"/>
</dbReference>
<dbReference type="MINT" id="Q92934"/>
<dbReference type="STRING" id="9606.ENSP00000378040"/>
<dbReference type="BindingDB" id="Q92934"/>
<dbReference type="ChEMBL" id="CHEMBL3817"/>
<dbReference type="DrugBank" id="DB12340">
    <property type="generic name" value="Navitoclax"/>
</dbReference>
<dbReference type="DrugCentral" id="Q92934"/>
<dbReference type="iPTMnet" id="Q92934"/>
<dbReference type="PhosphoSitePlus" id="Q92934"/>
<dbReference type="BioMuta" id="BAD"/>
<dbReference type="DMDM" id="17371773"/>
<dbReference type="jPOST" id="Q92934"/>
<dbReference type="MassIVE" id="Q92934"/>
<dbReference type="PaxDb" id="9606-ENSP00000378040"/>
<dbReference type="PeptideAtlas" id="Q92934"/>
<dbReference type="ProteomicsDB" id="75614"/>
<dbReference type="Pumba" id="Q92934"/>
<dbReference type="Antibodypedia" id="3776">
    <property type="antibodies" value="3094 antibodies from 49 providers"/>
</dbReference>
<dbReference type="CPTC" id="Q92934">
    <property type="antibodies" value="1 antibody"/>
</dbReference>
<dbReference type="DNASU" id="572"/>
<dbReference type="Ensembl" id="ENST00000309032.8">
    <property type="protein sequence ID" value="ENSP00000309103.3"/>
    <property type="gene ID" value="ENSG00000002330.14"/>
</dbReference>
<dbReference type="Ensembl" id="ENST00000394532.7">
    <property type="protein sequence ID" value="ENSP00000378040.3"/>
    <property type="gene ID" value="ENSG00000002330.14"/>
</dbReference>
<dbReference type="GeneID" id="572"/>
<dbReference type="KEGG" id="hsa:572"/>
<dbReference type="MANE-Select" id="ENST00000309032.8">
    <property type="protein sequence ID" value="ENSP00000309103.3"/>
    <property type="RefSeq nucleotide sequence ID" value="NM_032989.3"/>
    <property type="RefSeq protein sequence ID" value="NP_116784.1"/>
</dbReference>
<dbReference type="UCSC" id="uc001nzc.4">
    <property type="organism name" value="human"/>
</dbReference>
<dbReference type="AGR" id="HGNC:936"/>
<dbReference type="CTD" id="572"/>
<dbReference type="DisGeNET" id="572"/>
<dbReference type="GeneCards" id="BAD"/>
<dbReference type="HGNC" id="HGNC:936">
    <property type="gene designation" value="BAD"/>
</dbReference>
<dbReference type="HPA" id="ENSG00000002330">
    <property type="expression patterns" value="Low tissue specificity"/>
</dbReference>
<dbReference type="MIM" id="603167">
    <property type="type" value="gene"/>
</dbReference>
<dbReference type="neXtProt" id="NX_Q92934"/>
<dbReference type="OpenTargets" id="ENSG00000002330"/>
<dbReference type="PharmGKB" id="PA25236"/>
<dbReference type="VEuPathDB" id="HostDB:ENSG00000002330"/>
<dbReference type="eggNOG" id="ENOG502S71H">
    <property type="taxonomic scope" value="Eukaryota"/>
</dbReference>
<dbReference type="GeneTree" id="ENSGT00390000010740"/>
<dbReference type="HOGENOM" id="CLU_129052_0_0_1"/>
<dbReference type="InParanoid" id="Q92934"/>
<dbReference type="OMA" id="VIQSWWD"/>
<dbReference type="OrthoDB" id="8991151at2759"/>
<dbReference type="PAN-GO" id="Q92934">
    <property type="GO annotations" value="11 GO annotations based on evolutionary models"/>
</dbReference>
<dbReference type="PhylomeDB" id="Q92934"/>
<dbReference type="TreeFam" id="TF102001"/>
<dbReference type="PathwayCommons" id="Q92934"/>
<dbReference type="Reactome" id="R-HSA-111447">
    <property type="pathway name" value="Activation of BAD and translocation to mitochondria"/>
</dbReference>
<dbReference type="Reactome" id="R-HSA-111453">
    <property type="pathway name" value="BH3-only proteins associate with and inactivate anti-apoptotic BCL-2 members"/>
</dbReference>
<dbReference type="Reactome" id="R-HSA-193648">
    <property type="pathway name" value="NRAGE signals death through JNK"/>
</dbReference>
<dbReference type="Reactome" id="R-HSA-198323">
    <property type="pathway name" value="AKT phosphorylates targets in the cytosol"/>
</dbReference>
<dbReference type="Reactome" id="R-HSA-5674400">
    <property type="pathway name" value="Constitutive Signaling by AKT1 E17K in Cancer"/>
</dbReference>
<dbReference type="SignaLink" id="Q92934"/>
<dbReference type="SIGNOR" id="Q92934"/>
<dbReference type="BioGRID-ORCS" id="572">
    <property type="hits" value="16 hits in 1153 CRISPR screens"/>
</dbReference>
<dbReference type="ChiTaRS" id="BAD">
    <property type="organism name" value="human"/>
</dbReference>
<dbReference type="EvolutionaryTrace" id="Q92934"/>
<dbReference type="GeneWiki" id="Bcl-2-associated_death_promoter"/>
<dbReference type="GenomeRNAi" id="572"/>
<dbReference type="Pharos" id="Q92934">
    <property type="development level" value="Tchem"/>
</dbReference>
<dbReference type="PRO" id="PR:Q92934"/>
<dbReference type="Proteomes" id="UP000005640">
    <property type="component" value="Chromosome 11"/>
</dbReference>
<dbReference type="RNAct" id="Q92934">
    <property type="molecule type" value="protein"/>
</dbReference>
<dbReference type="Bgee" id="ENSG00000002330">
    <property type="expression patterns" value="Expressed in mucosa of transverse colon and 135 other cell types or tissues"/>
</dbReference>
<dbReference type="ExpressionAtlas" id="Q92934">
    <property type="expression patterns" value="baseline and differential"/>
</dbReference>
<dbReference type="GO" id="GO:0097138">
    <property type="term" value="C:BAD-BCL-2 complex"/>
    <property type="evidence" value="ECO:0000353"/>
    <property type="project" value="ComplexPortal"/>
</dbReference>
<dbReference type="GO" id="GO:0005829">
    <property type="term" value="C:cytosol"/>
    <property type="evidence" value="ECO:0000314"/>
    <property type="project" value="UniProtKB"/>
</dbReference>
<dbReference type="GO" id="GO:0005741">
    <property type="term" value="C:mitochondrial outer membrane"/>
    <property type="evidence" value="ECO:0000314"/>
    <property type="project" value="UniProtKB"/>
</dbReference>
<dbReference type="GO" id="GO:0005739">
    <property type="term" value="C:mitochondrion"/>
    <property type="evidence" value="ECO:0000314"/>
    <property type="project" value="HPA"/>
</dbReference>
<dbReference type="GO" id="GO:0140608">
    <property type="term" value="F:cysteine-type endopeptidase activator activity"/>
    <property type="evidence" value="ECO:0007669"/>
    <property type="project" value="Ensembl"/>
</dbReference>
<dbReference type="GO" id="GO:0008656">
    <property type="term" value="F:cysteine-type endopeptidase activator activity involved in apoptotic process"/>
    <property type="evidence" value="ECO:0000318"/>
    <property type="project" value="GO_Central"/>
</dbReference>
<dbReference type="GO" id="GO:0008289">
    <property type="term" value="F:lipid binding"/>
    <property type="evidence" value="ECO:0000314"/>
    <property type="project" value="UniProtKB"/>
</dbReference>
<dbReference type="GO" id="GO:0005543">
    <property type="term" value="F:phospholipid binding"/>
    <property type="evidence" value="ECO:0000315"/>
    <property type="project" value="UniProtKB"/>
</dbReference>
<dbReference type="GO" id="GO:0019901">
    <property type="term" value="F:protein kinase binding"/>
    <property type="evidence" value="ECO:0000353"/>
    <property type="project" value="UniProtKB"/>
</dbReference>
<dbReference type="GO" id="GO:0019903">
    <property type="term" value="F:protein phosphatase binding"/>
    <property type="evidence" value="ECO:0000318"/>
    <property type="project" value="GO_Central"/>
</dbReference>
<dbReference type="GO" id="GO:0046031">
    <property type="term" value="P:ADP metabolic process"/>
    <property type="evidence" value="ECO:0000250"/>
    <property type="project" value="UniProtKB"/>
</dbReference>
<dbReference type="GO" id="GO:0006915">
    <property type="term" value="P:apoptotic process"/>
    <property type="evidence" value="ECO:0000314"/>
    <property type="project" value="UniProtKB"/>
</dbReference>
<dbReference type="GO" id="GO:0046034">
    <property type="term" value="P:ATP metabolic process"/>
    <property type="evidence" value="ECO:0000250"/>
    <property type="project" value="UniProtKB"/>
</dbReference>
<dbReference type="GO" id="GO:0071456">
    <property type="term" value="P:cellular response to hypoxia"/>
    <property type="evidence" value="ECO:0000270"/>
    <property type="project" value="UniProtKB"/>
</dbReference>
<dbReference type="GO" id="GO:0071396">
    <property type="term" value="P:cellular response to lipid"/>
    <property type="evidence" value="ECO:0007669"/>
    <property type="project" value="Ensembl"/>
</dbReference>
<dbReference type="GO" id="GO:0071260">
    <property type="term" value="P:cellular response to mechanical stimulus"/>
    <property type="evidence" value="ECO:0000270"/>
    <property type="project" value="UniProtKB"/>
</dbReference>
<dbReference type="GO" id="GO:0071316">
    <property type="term" value="P:cellular response to nicotine"/>
    <property type="evidence" value="ECO:0000314"/>
    <property type="project" value="UniProtKB"/>
</dbReference>
<dbReference type="GO" id="GO:0019221">
    <property type="term" value="P:cytokine-mediated signaling pathway"/>
    <property type="evidence" value="ECO:0007669"/>
    <property type="project" value="Ensembl"/>
</dbReference>
<dbReference type="GO" id="GO:0097191">
    <property type="term" value="P:extrinsic apoptotic signaling pathway"/>
    <property type="evidence" value="ECO:0000315"/>
    <property type="project" value="UniProtKB"/>
</dbReference>
<dbReference type="GO" id="GO:0097192">
    <property type="term" value="P:extrinsic apoptotic signaling pathway in absence of ligand"/>
    <property type="evidence" value="ECO:0007669"/>
    <property type="project" value="Ensembl"/>
</dbReference>
<dbReference type="GO" id="GO:0008625">
    <property type="term" value="P:extrinsic apoptotic signaling pathway via death domain receptors"/>
    <property type="evidence" value="ECO:0007669"/>
    <property type="project" value="Ensembl"/>
</dbReference>
<dbReference type="GO" id="GO:0006007">
    <property type="term" value="P:glucose catabolic process"/>
    <property type="evidence" value="ECO:0007669"/>
    <property type="project" value="Ensembl"/>
</dbReference>
<dbReference type="GO" id="GO:0042593">
    <property type="term" value="P:glucose homeostasis"/>
    <property type="evidence" value="ECO:0000250"/>
    <property type="project" value="UniProtKB"/>
</dbReference>
<dbReference type="GO" id="GO:0097193">
    <property type="term" value="P:intrinsic apoptotic signaling pathway"/>
    <property type="evidence" value="ECO:0000315"/>
    <property type="project" value="UniProtKB"/>
</dbReference>
<dbReference type="GO" id="GO:0008630">
    <property type="term" value="P:intrinsic apoptotic signaling pathway in response to DNA damage"/>
    <property type="evidence" value="ECO:0007669"/>
    <property type="project" value="Ensembl"/>
</dbReference>
<dbReference type="GO" id="GO:0043066">
    <property type="term" value="P:negative regulation of apoptotic process"/>
    <property type="evidence" value="ECO:0000314"/>
    <property type="project" value="UniProtKB"/>
</dbReference>
<dbReference type="GO" id="GO:0046931">
    <property type="term" value="P:pore complex assembly"/>
    <property type="evidence" value="ECO:0000314"/>
    <property type="project" value="UniProtKB"/>
</dbReference>
<dbReference type="GO" id="GO:0043065">
    <property type="term" value="P:positive regulation of apoptotic process"/>
    <property type="evidence" value="ECO:0000314"/>
    <property type="project" value="UniProtKB"/>
</dbReference>
<dbReference type="GO" id="GO:0010508">
    <property type="term" value="P:positive regulation of autophagy"/>
    <property type="evidence" value="ECO:0000304"/>
    <property type="project" value="UniProtKB"/>
</dbReference>
<dbReference type="GO" id="GO:0045579">
    <property type="term" value="P:positive regulation of B cell differentiation"/>
    <property type="evidence" value="ECO:0007669"/>
    <property type="project" value="Ensembl"/>
</dbReference>
<dbReference type="GO" id="GO:0050679">
    <property type="term" value="P:positive regulation of epithelial cell proliferation"/>
    <property type="evidence" value="ECO:0000315"/>
    <property type="project" value="UniProtKB"/>
</dbReference>
<dbReference type="GO" id="GO:0032024">
    <property type="term" value="P:positive regulation of insulin secretion"/>
    <property type="evidence" value="ECO:0000250"/>
    <property type="project" value="UniProtKB"/>
</dbReference>
<dbReference type="GO" id="GO:0035774">
    <property type="term" value="P:positive regulation of insulin secretion involved in cellular response to glucose stimulus"/>
    <property type="evidence" value="ECO:0007669"/>
    <property type="project" value="Ensembl"/>
</dbReference>
<dbReference type="GO" id="GO:1902220">
    <property type="term" value="P:positive regulation of intrinsic apoptotic signaling pathway in response to osmotic stress"/>
    <property type="evidence" value="ECO:0007669"/>
    <property type="project" value="Ensembl"/>
</dbReference>
<dbReference type="GO" id="GO:0010918">
    <property type="term" value="P:positive regulation of mitochondrial membrane potential"/>
    <property type="evidence" value="ECO:0000250"/>
    <property type="project" value="UniProtKB"/>
</dbReference>
<dbReference type="GO" id="GO:0045862">
    <property type="term" value="P:positive regulation of proteolysis"/>
    <property type="evidence" value="ECO:0000314"/>
    <property type="project" value="BHF-UCL"/>
</dbReference>
<dbReference type="GO" id="GO:0090200">
    <property type="term" value="P:positive regulation of release of cytochrome c from mitochondria"/>
    <property type="evidence" value="ECO:0000315"/>
    <property type="project" value="UniProtKB"/>
</dbReference>
<dbReference type="GO" id="GO:0045582">
    <property type="term" value="P:positive regulation of T cell differentiation"/>
    <property type="evidence" value="ECO:0007669"/>
    <property type="project" value="Ensembl"/>
</dbReference>
<dbReference type="GO" id="GO:2000078">
    <property type="term" value="P:positive regulation of type B pancreatic cell development"/>
    <property type="evidence" value="ECO:0000250"/>
    <property type="project" value="UniProtKB"/>
</dbReference>
<dbReference type="GO" id="GO:0046902">
    <property type="term" value="P:regulation of mitochondrial membrane permeability"/>
    <property type="evidence" value="ECO:0000315"/>
    <property type="project" value="UniProtKB"/>
</dbReference>
<dbReference type="GO" id="GO:0001836">
    <property type="term" value="P:release of cytochrome c from mitochondria"/>
    <property type="evidence" value="ECO:0000318"/>
    <property type="project" value="GO_Central"/>
</dbReference>
<dbReference type="GO" id="GO:0044342">
    <property type="term" value="P:type B pancreatic cell proliferation"/>
    <property type="evidence" value="ECO:0000250"/>
    <property type="project" value="UniProtKB"/>
</dbReference>
<dbReference type="InterPro" id="IPR018868">
    <property type="entry name" value="BAD"/>
</dbReference>
<dbReference type="PANTHER" id="PTHR28540">
    <property type="entry name" value="BCL2-ASSOCIATED AGONIST OF CELL DEATH"/>
    <property type="match status" value="1"/>
</dbReference>
<dbReference type="PANTHER" id="PTHR28540:SF1">
    <property type="entry name" value="BCL2-ASSOCIATED AGONIST OF CELL DEATH"/>
    <property type="match status" value="1"/>
</dbReference>
<dbReference type="Pfam" id="PF10514">
    <property type="entry name" value="Bcl-2_BAD"/>
    <property type="match status" value="1"/>
</dbReference>
<gene>
    <name type="primary">BAD</name>
    <name type="synonym">BBC6</name>
    <name type="synonym">BCL2L8</name>
</gene>
<proteinExistence type="evidence at protein level"/>
<name>BAD_HUMAN</name>